<gene>
    <name evidence="1" type="primary">tolB</name>
    <name type="ordered locus">Noc_0145</name>
</gene>
<keyword id="KW-0131">Cell cycle</keyword>
<keyword id="KW-0132">Cell division</keyword>
<keyword id="KW-0574">Periplasm</keyword>
<keyword id="KW-1185">Reference proteome</keyword>
<keyword id="KW-0732">Signal</keyword>
<comment type="function">
    <text evidence="1">Part of the Tol-Pal system, which plays a role in outer membrane invagination during cell division and is important for maintaining outer membrane integrity.</text>
</comment>
<comment type="subunit">
    <text evidence="1">The Tol-Pal system is composed of five core proteins: the inner membrane proteins TolA, TolQ and TolR, the periplasmic protein TolB and the outer membrane protein Pal. They form a network linking the inner and outer membranes and the peptidoglycan layer.</text>
</comment>
<comment type="subcellular location">
    <subcellularLocation>
        <location evidence="1">Periplasm</location>
    </subcellularLocation>
</comment>
<comment type="similarity">
    <text evidence="1">Belongs to the TolB family.</text>
</comment>
<protein>
    <recommendedName>
        <fullName evidence="1">Tol-Pal system protein TolB</fullName>
    </recommendedName>
</protein>
<proteinExistence type="inferred from homology"/>
<evidence type="ECO:0000255" key="1">
    <source>
        <dbReference type="HAMAP-Rule" id="MF_00671"/>
    </source>
</evidence>
<dbReference type="EMBL" id="CP000127">
    <property type="protein sequence ID" value="ABA56678.1"/>
    <property type="molecule type" value="Genomic_DNA"/>
</dbReference>
<dbReference type="RefSeq" id="WP_011330243.1">
    <property type="nucleotide sequence ID" value="NC_007484.1"/>
</dbReference>
<dbReference type="SMR" id="Q3JER8"/>
<dbReference type="FunCoup" id="Q3JER8">
    <property type="interactions" value="60"/>
</dbReference>
<dbReference type="STRING" id="323261.Noc_0145"/>
<dbReference type="KEGG" id="noc:Noc_0145"/>
<dbReference type="eggNOG" id="COG0823">
    <property type="taxonomic scope" value="Bacteria"/>
</dbReference>
<dbReference type="HOGENOM" id="CLU_047123_0_0_6"/>
<dbReference type="InParanoid" id="Q3JER8"/>
<dbReference type="Proteomes" id="UP000006838">
    <property type="component" value="Chromosome"/>
</dbReference>
<dbReference type="GO" id="GO:0042597">
    <property type="term" value="C:periplasmic space"/>
    <property type="evidence" value="ECO:0007669"/>
    <property type="project" value="UniProtKB-SubCell"/>
</dbReference>
<dbReference type="GO" id="GO:0051301">
    <property type="term" value="P:cell division"/>
    <property type="evidence" value="ECO:0007669"/>
    <property type="project" value="UniProtKB-UniRule"/>
</dbReference>
<dbReference type="GO" id="GO:0017038">
    <property type="term" value="P:protein import"/>
    <property type="evidence" value="ECO:0007669"/>
    <property type="project" value="InterPro"/>
</dbReference>
<dbReference type="Gene3D" id="2.120.10.30">
    <property type="entry name" value="TolB, C-terminal domain"/>
    <property type="match status" value="1"/>
</dbReference>
<dbReference type="Gene3D" id="3.40.50.10070">
    <property type="entry name" value="TolB, N-terminal domain"/>
    <property type="match status" value="1"/>
</dbReference>
<dbReference type="HAMAP" id="MF_00671">
    <property type="entry name" value="TolB"/>
    <property type="match status" value="1"/>
</dbReference>
<dbReference type="InterPro" id="IPR011042">
    <property type="entry name" value="6-blade_b-propeller_TolB-like"/>
</dbReference>
<dbReference type="InterPro" id="IPR011659">
    <property type="entry name" value="PD40"/>
</dbReference>
<dbReference type="InterPro" id="IPR014167">
    <property type="entry name" value="Tol-Pal_TolB"/>
</dbReference>
<dbReference type="InterPro" id="IPR007195">
    <property type="entry name" value="TolB_N"/>
</dbReference>
<dbReference type="NCBIfam" id="TIGR02800">
    <property type="entry name" value="propeller_TolB"/>
    <property type="match status" value="1"/>
</dbReference>
<dbReference type="PANTHER" id="PTHR36842:SF1">
    <property type="entry name" value="PROTEIN TOLB"/>
    <property type="match status" value="1"/>
</dbReference>
<dbReference type="PANTHER" id="PTHR36842">
    <property type="entry name" value="PROTEIN TOLB HOMOLOG"/>
    <property type="match status" value="1"/>
</dbReference>
<dbReference type="Pfam" id="PF07676">
    <property type="entry name" value="PD40"/>
    <property type="match status" value="5"/>
</dbReference>
<dbReference type="Pfam" id="PF04052">
    <property type="entry name" value="TolB_N"/>
    <property type="match status" value="1"/>
</dbReference>
<dbReference type="SUPFAM" id="SSF52964">
    <property type="entry name" value="TolB, N-terminal domain"/>
    <property type="match status" value="1"/>
</dbReference>
<dbReference type="SUPFAM" id="SSF69304">
    <property type="entry name" value="Tricorn protease N-terminal domain"/>
    <property type="match status" value="1"/>
</dbReference>
<accession>Q3JER8</accession>
<name>TOLB_NITOC</name>
<feature type="signal peptide" evidence="1">
    <location>
        <begin position="1"/>
        <end position="28"/>
    </location>
</feature>
<feature type="chain" id="PRO_0000259061" description="Tol-Pal system protein TolB" evidence="1">
    <location>
        <begin position="29"/>
        <end position="434"/>
    </location>
</feature>
<organism>
    <name type="scientific">Nitrosococcus oceani (strain ATCC 19707 / BCRC 17464 / JCM 30415 / NCIMB 11848 / C-107)</name>
    <dbReference type="NCBI Taxonomy" id="323261"/>
    <lineage>
        <taxon>Bacteria</taxon>
        <taxon>Pseudomonadati</taxon>
        <taxon>Pseudomonadota</taxon>
        <taxon>Gammaproteobacteria</taxon>
        <taxon>Chromatiales</taxon>
        <taxon>Chromatiaceae</taxon>
        <taxon>Nitrosococcus</taxon>
    </lineage>
</organism>
<reference key="1">
    <citation type="journal article" date="2006" name="Appl. Environ. Microbiol.">
        <title>Complete genome sequence of the marine, chemolithoautotrophic, ammonia-oxidizing bacterium Nitrosococcus oceani ATCC 19707.</title>
        <authorList>
            <person name="Klotz M.G."/>
            <person name="Arp D.J."/>
            <person name="Chain P.S.G."/>
            <person name="El-Sheikh A.F."/>
            <person name="Hauser L.J."/>
            <person name="Hommes N.G."/>
            <person name="Larimer F.W."/>
            <person name="Malfatti S.A."/>
            <person name="Norton J.M."/>
            <person name="Poret-Peterson A.T."/>
            <person name="Vergez L.M."/>
            <person name="Ward B.B."/>
        </authorList>
    </citation>
    <scope>NUCLEOTIDE SEQUENCE [LARGE SCALE GENOMIC DNA]</scope>
    <source>
        <strain>ATCC 19707 / BCRC 17464 / JCM 30415 / NCIMB 11848 / C-107</strain>
    </source>
</reference>
<sequence>MMNTRVWCKIIGMLALLVWLVSSPSVFAVLTIEITGGTEAALPIAIVPFQNEGSTPPENVAAVIAADLARSGRFAPLPEEDLISRPRNASDIQFQDWRRLGSEGLVIGKVISLGADRYEVRFQLFDIYKEEQLVGRRYQVPAAGLRHLAHQIADLIYETLTGEKGIFTTHIAFVTVSRAAHGAKQYSLQVADVDGHNPHTILRSKEPILSPAWSPDGTQLAYVSFERRRSEVFVQELRTGQRQSVASFSGINSAPDWSPDGGKLALVLSKEGNPEIYIRDLATGRLTRLTHNTAIDTEPAWAPDGGSIVFTSDRGGRPQLYQIPVSGGRAQRLTFDGAYNASASFAPDGRRLALIHGDKGQFHIAVLNLQSKELQVLTETRMDESPSFAPNGRMILYATSSPQGGVLAAVSTDGRVRQRLAQQGDEVREPAWSP</sequence>